<feature type="chain" id="PRO_0000208989" description="Probable potassium transport system protein Kup 2">
    <location>
        <begin position="1"/>
        <end position="637"/>
    </location>
</feature>
<feature type="transmembrane region" description="Helical" evidence="1">
    <location>
        <begin position="18"/>
        <end position="38"/>
    </location>
</feature>
<feature type="transmembrane region" description="Helical" evidence="1">
    <location>
        <begin position="61"/>
        <end position="81"/>
    </location>
</feature>
<feature type="transmembrane region" description="Helical" evidence="1">
    <location>
        <begin position="107"/>
        <end position="127"/>
    </location>
</feature>
<feature type="transmembrane region" description="Helical" evidence="1">
    <location>
        <begin position="145"/>
        <end position="165"/>
    </location>
</feature>
<feature type="transmembrane region" description="Helical" evidence="1">
    <location>
        <begin position="174"/>
        <end position="194"/>
    </location>
</feature>
<feature type="transmembrane region" description="Helical" evidence="1">
    <location>
        <begin position="211"/>
        <end position="231"/>
    </location>
</feature>
<feature type="transmembrane region" description="Helical" evidence="1">
    <location>
        <begin position="255"/>
        <end position="275"/>
    </location>
</feature>
<feature type="transmembrane region" description="Helical" evidence="1">
    <location>
        <begin position="293"/>
        <end position="313"/>
    </location>
</feature>
<feature type="transmembrane region" description="Helical" evidence="1">
    <location>
        <begin position="345"/>
        <end position="365"/>
    </location>
</feature>
<feature type="transmembrane region" description="Helical" evidence="1">
    <location>
        <begin position="371"/>
        <end position="391"/>
    </location>
</feature>
<feature type="transmembrane region" description="Helical" evidence="1">
    <location>
        <begin position="402"/>
        <end position="422"/>
    </location>
</feature>
<feature type="transmembrane region" description="Helical" evidence="1">
    <location>
        <begin position="429"/>
        <end position="449"/>
    </location>
</feature>
<gene>
    <name evidence="1" type="primary">kup2</name>
    <name type="ordered locus">Atu5466</name>
    <name type="ORF">AGR_pAT_688</name>
</gene>
<proteinExistence type="inferred from homology"/>
<reference key="1">
    <citation type="journal article" date="2001" name="Science">
        <title>The genome of the natural genetic engineer Agrobacterium tumefaciens C58.</title>
        <authorList>
            <person name="Wood D.W."/>
            <person name="Setubal J.C."/>
            <person name="Kaul R."/>
            <person name="Monks D.E."/>
            <person name="Kitajima J.P."/>
            <person name="Okura V.K."/>
            <person name="Zhou Y."/>
            <person name="Chen L."/>
            <person name="Wood G.E."/>
            <person name="Almeida N.F. Jr."/>
            <person name="Woo L."/>
            <person name="Chen Y."/>
            <person name="Paulsen I.T."/>
            <person name="Eisen J.A."/>
            <person name="Karp P.D."/>
            <person name="Bovee D. Sr."/>
            <person name="Chapman P."/>
            <person name="Clendenning J."/>
            <person name="Deatherage G."/>
            <person name="Gillet W."/>
            <person name="Grant C."/>
            <person name="Kutyavin T."/>
            <person name="Levy R."/>
            <person name="Li M.-J."/>
            <person name="McClelland E."/>
            <person name="Palmieri A."/>
            <person name="Raymond C."/>
            <person name="Rouse G."/>
            <person name="Saenphimmachak C."/>
            <person name="Wu Z."/>
            <person name="Romero P."/>
            <person name="Gordon D."/>
            <person name="Zhang S."/>
            <person name="Yoo H."/>
            <person name="Tao Y."/>
            <person name="Biddle P."/>
            <person name="Jung M."/>
            <person name="Krespan W."/>
            <person name="Perry M."/>
            <person name="Gordon-Kamm B."/>
            <person name="Liao L."/>
            <person name="Kim S."/>
            <person name="Hendrick C."/>
            <person name="Zhao Z.-Y."/>
            <person name="Dolan M."/>
            <person name="Chumley F."/>
            <person name="Tingey S.V."/>
            <person name="Tomb J.-F."/>
            <person name="Gordon M.P."/>
            <person name="Olson M.V."/>
            <person name="Nester E.W."/>
        </authorList>
    </citation>
    <scope>NUCLEOTIDE SEQUENCE [LARGE SCALE GENOMIC DNA]</scope>
</reference>
<reference key="2">
    <citation type="journal article" date="2001" name="Science">
        <title>Genome sequence of the plant pathogen and biotechnology agent Agrobacterium tumefaciens C58.</title>
        <authorList>
            <person name="Goodner B."/>
            <person name="Hinkle G."/>
            <person name="Gattung S."/>
            <person name="Miller N."/>
            <person name="Blanchard M."/>
            <person name="Qurollo B."/>
            <person name="Goldman B.S."/>
            <person name="Cao Y."/>
            <person name="Askenazi M."/>
            <person name="Halling C."/>
            <person name="Mullin L."/>
            <person name="Houmiel K."/>
            <person name="Gordon J."/>
            <person name="Vaudin M."/>
            <person name="Iartchouk O."/>
            <person name="Epp A."/>
            <person name="Liu F."/>
            <person name="Wollam C."/>
            <person name="Allinger M."/>
            <person name="Doughty D."/>
            <person name="Scott C."/>
            <person name="Lappas C."/>
            <person name="Markelz B."/>
            <person name="Flanagan C."/>
            <person name="Crowell C."/>
            <person name="Gurson J."/>
            <person name="Lomo C."/>
            <person name="Sear C."/>
            <person name="Strub G."/>
            <person name="Cielo C."/>
            <person name="Slater S."/>
        </authorList>
    </citation>
    <scope>NUCLEOTIDE SEQUENCE [LARGE SCALE GENOMIC DNA]</scope>
    <source>
        <strain>C58 / ATCC 33970</strain>
    </source>
</reference>
<accession>Q8UJL0</accession>
<accession>Q7D304</accession>
<sequence>MTSSNSTVPDSRSETKKFLVLLLGSIGVVYGDIGTSPLYAFRESLRPFTANGVQHEHVVGLISLMIWTLTIIVTFKYVLFLLRADNDGEGGTLSLLALLMKKTGSYMPVLFFAGLIGSALFIGDAMITPALSVMSALEGMKLVTPAFSDYVLPLSALIMVGLFAVQSKGTGAVAVFFGPITVVWFLAMAWGGLIHIGDDWTILEAVNPINALWFITHAGWAGLIVLGAVFLTVTGAEALYADLGHFGRKPISVAWFILVFPALALNYLGQGALVLSNPAAIENPFYLLYPEWALFPMIILATMATVIASQAVITGAFSLARQAVHLGFLPKLMIRFTSETNTGQIYVPAVNMVLFIGVLVLIFSFGDSESLATAYGISVTGAMVVTTLMAFQFLRSIRGKSAFTAAILLAPLFSIEAVFLAANLLKVHDGGWVPLALAGVIILVMWTWTKGSRYLREKISKNDVSLDTFITSLERSISRESRSAPVLVSGTAVFLTSVPDKAPSVLLHNLKHNHVLHEQNVILTIWTHDKPYVADTDRVEITRISKHFMRLDINFGFMDDPNVVKALPLCKKKGFKFEIMQTSFYLGRRNLIATPNTGLPRWQEDLYIALADFGVDPSAYFKLPPNRVIEIGEQVAI</sequence>
<geneLocation type="plasmid">
    <name>AT</name>
</geneLocation>
<organism>
    <name type="scientific">Agrobacterium fabrum (strain C58 / ATCC 33970)</name>
    <name type="common">Agrobacterium tumefaciens (strain C58)</name>
    <dbReference type="NCBI Taxonomy" id="176299"/>
    <lineage>
        <taxon>Bacteria</taxon>
        <taxon>Pseudomonadati</taxon>
        <taxon>Pseudomonadota</taxon>
        <taxon>Alphaproteobacteria</taxon>
        <taxon>Hyphomicrobiales</taxon>
        <taxon>Rhizobiaceae</taxon>
        <taxon>Rhizobium/Agrobacterium group</taxon>
        <taxon>Agrobacterium</taxon>
        <taxon>Agrobacterium tumefaciens complex</taxon>
    </lineage>
</organism>
<comment type="function">
    <text evidence="1">Transport of potassium into the cell. Likely operates as a K(+):H(+) symporter.</text>
</comment>
<comment type="catalytic activity">
    <reaction evidence="1">
        <text>K(+)(in) + H(+)(in) = K(+)(out) + H(+)(out)</text>
        <dbReference type="Rhea" id="RHEA:28490"/>
        <dbReference type="ChEBI" id="CHEBI:15378"/>
        <dbReference type="ChEBI" id="CHEBI:29103"/>
    </reaction>
    <physiologicalReaction direction="right-to-left" evidence="1">
        <dbReference type="Rhea" id="RHEA:28492"/>
    </physiologicalReaction>
</comment>
<comment type="subcellular location">
    <subcellularLocation>
        <location evidence="1">Cell inner membrane</location>
        <topology evidence="1">Multi-pass membrane protein</topology>
    </subcellularLocation>
</comment>
<comment type="similarity">
    <text evidence="1">Belongs to the HAK/KUP transporter (TC 2.A.72) family.</text>
</comment>
<name>KUP2_AGRFC</name>
<keyword id="KW-0997">Cell inner membrane</keyword>
<keyword id="KW-1003">Cell membrane</keyword>
<keyword id="KW-0406">Ion transport</keyword>
<keyword id="KW-0472">Membrane</keyword>
<keyword id="KW-0614">Plasmid</keyword>
<keyword id="KW-0630">Potassium</keyword>
<keyword id="KW-0633">Potassium transport</keyword>
<keyword id="KW-1185">Reference proteome</keyword>
<keyword id="KW-0769">Symport</keyword>
<keyword id="KW-0812">Transmembrane</keyword>
<keyword id="KW-1133">Transmembrane helix</keyword>
<keyword id="KW-0813">Transport</keyword>
<evidence type="ECO:0000255" key="1">
    <source>
        <dbReference type="HAMAP-Rule" id="MF_01522"/>
    </source>
</evidence>
<protein>
    <recommendedName>
        <fullName evidence="1">Probable potassium transport system protein Kup 2</fullName>
    </recommendedName>
</protein>
<dbReference type="EMBL" id="AE007872">
    <property type="protein sequence ID" value="AAK90841.2"/>
    <property type="molecule type" value="Genomic_DNA"/>
</dbReference>
<dbReference type="PIR" id="AC3217">
    <property type="entry name" value="AC3217"/>
</dbReference>
<dbReference type="RefSeq" id="NP_396400.2">
    <property type="nucleotide sequence ID" value="NC_003064.2"/>
</dbReference>
<dbReference type="RefSeq" id="WP_010974698.1">
    <property type="nucleotide sequence ID" value="NC_003064.2"/>
</dbReference>
<dbReference type="EnsemblBacteria" id="AAK90841">
    <property type="protein sequence ID" value="AAK90841"/>
    <property type="gene ID" value="Atu5466"/>
</dbReference>
<dbReference type="GeneID" id="1137239"/>
<dbReference type="KEGG" id="atu:Atu5466"/>
<dbReference type="PATRIC" id="fig|176299.10.peg.5138"/>
<dbReference type="eggNOG" id="COG3158">
    <property type="taxonomic scope" value="Bacteria"/>
</dbReference>
<dbReference type="HOGENOM" id="CLU_008142_4_2_5"/>
<dbReference type="OrthoDB" id="9805577at2"/>
<dbReference type="PhylomeDB" id="Q8UJL0"/>
<dbReference type="BioCyc" id="AGRO:ATU5466-MONOMER"/>
<dbReference type="Proteomes" id="UP000000813">
    <property type="component" value="Plasmid At"/>
</dbReference>
<dbReference type="GO" id="GO:0005886">
    <property type="term" value="C:plasma membrane"/>
    <property type="evidence" value="ECO:0007669"/>
    <property type="project" value="UniProtKB-SubCell"/>
</dbReference>
<dbReference type="GO" id="GO:0015079">
    <property type="term" value="F:potassium ion transmembrane transporter activity"/>
    <property type="evidence" value="ECO:0007669"/>
    <property type="project" value="UniProtKB-UniRule"/>
</dbReference>
<dbReference type="GO" id="GO:0015293">
    <property type="term" value="F:symporter activity"/>
    <property type="evidence" value="ECO:0007669"/>
    <property type="project" value="UniProtKB-UniRule"/>
</dbReference>
<dbReference type="HAMAP" id="MF_01522">
    <property type="entry name" value="Kup"/>
    <property type="match status" value="1"/>
</dbReference>
<dbReference type="InterPro" id="IPR003855">
    <property type="entry name" value="K+_transporter"/>
</dbReference>
<dbReference type="InterPro" id="IPR053952">
    <property type="entry name" value="K_trans_C"/>
</dbReference>
<dbReference type="InterPro" id="IPR053951">
    <property type="entry name" value="K_trans_N"/>
</dbReference>
<dbReference type="InterPro" id="IPR023051">
    <property type="entry name" value="Kup"/>
</dbReference>
<dbReference type="PANTHER" id="PTHR30540:SF79">
    <property type="entry name" value="LOW AFFINITY POTASSIUM TRANSPORT SYSTEM PROTEIN KUP"/>
    <property type="match status" value="1"/>
</dbReference>
<dbReference type="PANTHER" id="PTHR30540">
    <property type="entry name" value="OSMOTIC STRESS POTASSIUM TRANSPORTER"/>
    <property type="match status" value="1"/>
</dbReference>
<dbReference type="Pfam" id="PF02705">
    <property type="entry name" value="K_trans"/>
    <property type="match status" value="1"/>
</dbReference>
<dbReference type="Pfam" id="PF22776">
    <property type="entry name" value="K_trans_C"/>
    <property type="match status" value="1"/>
</dbReference>